<sequence length="360" mass="39032">MTTWVIKIGTSLLRGNDKYTTFDVINDYCSYISKAQRNGDKIILVSSGAVGLGCHQMRFKTRPKEIISLQASAAIGQLHLMALYEKAMSSFGYKVAQILLTRSELGSRNSYNSASQTLKRLLEWDVIPIVNENDITSDEELKYGDNDTLSALVATAISADQLILLTDIDHLYSSDPKINSKAKPIKDINNSKELNNLELANEQTSWGTGGIKTKLTAAKIATESGIKVQLADGRDPKILGELLDGKKIGTVFHPNPNPIGNRKSWLAHAIKPVGEIHLDDGASEAIKNKGASLLLVGVKKVSGDFIANQPVKVINTEGEEFAKGICSMSSDAIKIGINSRSETTGSPLVIHRDVLVLTSE</sequence>
<gene>
    <name evidence="1" type="primary">proB</name>
    <name type="ordered locus">PMN2A_0196</name>
</gene>
<reference key="1">
    <citation type="journal article" date="2007" name="PLoS Genet.">
        <title>Patterns and implications of gene gain and loss in the evolution of Prochlorococcus.</title>
        <authorList>
            <person name="Kettler G.C."/>
            <person name="Martiny A.C."/>
            <person name="Huang K."/>
            <person name="Zucker J."/>
            <person name="Coleman M.L."/>
            <person name="Rodrigue S."/>
            <person name="Chen F."/>
            <person name="Lapidus A."/>
            <person name="Ferriera S."/>
            <person name="Johnson J."/>
            <person name="Steglich C."/>
            <person name="Church G.M."/>
            <person name="Richardson P."/>
            <person name="Chisholm S.W."/>
        </authorList>
    </citation>
    <scope>NUCLEOTIDE SEQUENCE [LARGE SCALE GENOMIC DNA]</scope>
    <source>
        <strain>NATL2A</strain>
    </source>
</reference>
<protein>
    <recommendedName>
        <fullName evidence="1">Glutamate 5-kinase</fullName>
        <ecNumber evidence="1">2.7.2.11</ecNumber>
    </recommendedName>
    <alternativeName>
        <fullName evidence="1">Gamma-glutamyl kinase</fullName>
        <shortName evidence="1">GK</shortName>
    </alternativeName>
</protein>
<organism>
    <name type="scientific">Prochlorococcus marinus (strain NATL2A)</name>
    <dbReference type="NCBI Taxonomy" id="59920"/>
    <lineage>
        <taxon>Bacteria</taxon>
        <taxon>Bacillati</taxon>
        <taxon>Cyanobacteriota</taxon>
        <taxon>Cyanophyceae</taxon>
        <taxon>Synechococcales</taxon>
        <taxon>Prochlorococcaceae</taxon>
        <taxon>Prochlorococcus</taxon>
    </lineage>
</organism>
<name>PROB_PROMT</name>
<keyword id="KW-0028">Amino-acid biosynthesis</keyword>
<keyword id="KW-0067">ATP-binding</keyword>
<keyword id="KW-0963">Cytoplasm</keyword>
<keyword id="KW-0418">Kinase</keyword>
<keyword id="KW-0547">Nucleotide-binding</keyword>
<keyword id="KW-0641">Proline biosynthesis</keyword>
<keyword id="KW-1185">Reference proteome</keyword>
<keyword id="KW-0808">Transferase</keyword>
<dbReference type="EC" id="2.7.2.11" evidence="1"/>
<dbReference type="EMBL" id="CP000095">
    <property type="protein sequence ID" value="AAZ57688.1"/>
    <property type="molecule type" value="Genomic_DNA"/>
</dbReference>
<dbReference type="RefSeq" id="WP_011293730.1">
    <property type="nucleotide sequence ID" value="NC_007335.2"/>
</dbReference>
<dbReference type="SMR" id="Q46LE0"/>
<dbReference type="STRING" id="59920.PMN2A_0196"/>
<dbReference type="KEGG" id="pmn:PMN2A_0196"/>
<dbReference type="HOGENOM" id="CLU_025400_2_0_3"/>
<dbReference type="OrthoDB" id="9804434at2"/>
<dbReference type="PhylomeDB" id="Q46LE0"/>
<dbReference type="UniPathway" id="UPA00098">
    <property type="reaction ID" value="UER00359"/>
</dbReference>
<dbReference type="Proteomes" id="UP000002535">
    <property type="component" value="Chromosome"/>
</dbReference>
<dbReference type="GO" id="GO:0005829">
    <property type="term" value="C:cytosol"/>
    <property type="evidence" value="ECO:0007669"/>
    <property type="project" value="TreeGrafter"/>
</dbReference>
<dbReference type="GO" id="GO:0005524">
    <property type="term" value="F:ATP binding"/>
    <property type="evidence" value="ECO:0007669"/>
    <property type="project" value="UniProtKB-KW"/>
</dbReference>
<dbReference type="GO" id="GO:0004349">
    <property type="term" value="F:glutamate 5-kinase activity"/>
    <property type="evidence" value="ECO:0007669"/>
    <property type="project" value="UniProtKB-UniRule"/>
</dbReference>
<dbReference type="GO" id="GO:0003723">
    <property type="term" value="F:RNA binding"/>
    <property type="evidence" value="ECO:0007669"/>
    <property type="project" value="InterPro"/>
</dbReference>
<dbReference type="GO" id="GO:0055129">
    <property type="term" value="P:L-proline biosynthetic process"/>
    <property type="evidence" value="ECO:0007669"/>
    <property type="project" value="UniProtKB-UniRule"/>
</dbReference>
<dbReference type="CDD" id="cd04242">
    <property type="entry name" value="AAK_G5K_ProB"/>
    <property type="match status" value="1"/>
</dbReference>
<dbReference type="CDD" id="cd21157">
    <property type="entry name" value="PUA_G5K"/>
    <property type="match status" value="1"/>
</dbReference>
<dbReference type="FunFam" id="3.40.1160.10:FF:000018">
    <property type="entry name" value="Glutamate 5-kinase"/>
    <property type="match status" value="1"/>
</dbReference>
<dbReference type="Gene3D" id="3.40.1160.10">
    <property type="entry name" value="Acetylglutamate kinase-like"/>
    <property type="match status" value="1"/>
</dbReference>
<dbReference type="Gene3D" id="2.30.130.10">
    <property type="entry name" value="PUA domain"/>
    <property type="match status" value="1"/>
</dbReference>
<dbReference type="HAMAP" id="MF_00456">
    <property type="entry name" value="ProB"/>
    <property type="match status" value="1"/>
</dbReference>
<dbReference type="InterPro" id="IPR036393">
    <property type="entry name" value="AceGlu_kinase-like_sf"/>
</dbReference>
<dbReference type="InterPro" id="IPR001048">
    <property type="entry name" value="Asp/Glu/Uridylate_kinase"/>
</dbReference>
<dbReference type="InterPro" id="IPR041739">
    <property type="entry name" value="G5K_ProB"/>
</dbReference>
<dbReference type="InterPro" id="IPR001057">
    <property type="entry name" value="Glu/AcGlu_kinase"/>
</dbReference>
<dbReference type="InterPro" id="IPR011529">
    <property type="entry name" value="Glu_5kinase"/>
</dbReference>
<dbReference type="InterPro" id="IPR005715">
    <property type="entry name" value="Glu_5kinase/COase_Synthase"/>
</dbReference>
<dbReference type="InterPro" id="IPR019797">
    <property type="entry name" value="Glutamate_5-kinase_CS"/>
</dbReference>
<dbReference type="InterPro" id="IPR002478">
    <property type="entry name" value="PUA"/>
</dbReference>
<dbReference type="InterPro" id="IPR015947">
    <property type="entry name" value="PUA-like_sf"/>
</dbReference>
<dbReference type="InterPro" id="IPR036974">
    <property type="entry name" value="PUA_sf"/>
</dbReference>
<dbReference type="NCBIfam" id="TIGR01027">
    <property type="entry name" value="proB"/>
    <property type="match status" value="1"/>
</dbReference>
<dbReference type="PANTHER" id="PTHR43654">
    <property type="entry name" value="GLUTAMATE 5-KINASE"/>
    <property type="match status" value="1"/>
</dbReference>
<dbReference type="PANTHER" id="PTHR43654:SF3">
    <property type="entry name" value="GLUTAMATE 5-KINASE"/>
    <property type="match status" value="1"/>
</dbReference>
<dbReference type="Pfam" id="PF00696">
    <property type="entry name" value="AA_kinase"/>
    <property type="match status" value="1"/>
</dbReference>
<dbReference type="Pfam" id="PF01472">
    <property type="entry name" value="PUA"/>
    <property type="match status" value="1"/>
</dbReference>
<dbReference type="PIRSF" id="PIRSF000729">
    <property type="entry name" value="GK"/>
    <property type="match status" value="1"/>
</dbReference>
<dbReference type="PRINTS" id="PR00474">
    <property type="entry name" value="GLU5KINASE"/>
</dbReference>
<dbReference type="SMART" id="SM00359">
    <property type="entry name" value="PUA"/>
    <property type="match status" value="1"/>
</dbReference>
<dbReference type="SUPFAM" id="SSF53633">
    <property type="entry name" value="Carbamate kinase-like"/>
    <property type="match status" value="1"/>
</dbReference>
<dbReference type="SUPFAM" id="SSF88697">
    <property type="entry name" value="PUA domain-like"/>
    <property type="match status" value="1"/>
</dbReference>
<dbReference type="PROSITE" id="PS00902">
    <property type="entry name" value="GLUTAMATE_5_KINASE"/>
    <property type="match status" value="1"/>
</dbReference>
<dbReference type="PROSITE" id="PS50890">
    <property type="entry name" value="PUA"/>
    <property type="match status" value="1"/>
</dbReference>
<comment type="function">
    <text evidence="1">Catalyzes the transfer of a phosphate group to glutamate to form L-glutamate 5-phosphate.</text>
</comment>
<comment type="catalytic activity">
    <reaction evidence="1">
        <text>L-glutamate + ATP = L-glutamyl 5-phosphate + ADP</text>
        <dbReference type="Rhea" id="RHEA:14877"/>
        <dbReference type="ChEBI" id="CHEBI:29985"/>
        <dbReference type="ChEBI" id="CHEBI:30616"/>
        <dbReference type="ChEBI" id="CHEBI:58274"/>
        <dbReference type="ChEBI" id="CHEBI:456216"/>
        <dbReference type="EC" id="2.7.2.11"/>
    </reaction>
</comment>
<comment type="pathway">
    <text evidence="1">Amino-acid biosynthesis; L-proline biosynthesis; L-glutamate 5-semialdehyde from L-glutamate: step 1/2.</text>
</comment>
<comment type="subcellular location">
    <subcellularLocation>
        <location evidence="1">Cytoplasm</location>
    </subcellularLocation>
</comment>
<comment type="similarity">
    <text evidence="1">Belongs to the glutamate 5-kinase family.</text>
</comment>
<feature type="chain" id="PRO_0000230054" description="Glutamate 5-kinase">
    <location>
        <begin position="1"/>
        <end position="360"/>
    </location>
</feature>
<feature type="domain" description="PUA" evidence="1">
    <location>
        <begin position="273"/>
        <end position="344"/>
    </location>
</feature>
<feature type="binding site" evidence="1">
    <location>
        <position position="7"/>
    </location>
    <ligand>
        <name>ATP</name>
        <dbReference type="ChEBI" id="CHEBI:30616"/>
    </ligand>
</feature>
<feature type="binding site" evidence="1">
    <location>
        <position position="47"/>
    </location>
    <ligand>
        <name>substrate</name>
    </ligand>
</feature>
<feature type="binding site" evidence="1">
    <location>
        <position position="134"/>
    </location>
    <ligand>
        <name>substrate</name>
    </ligand>
</feature>
<feature type="binding site" evidence="1">
    <location>
        <position position="146"/>
    </location>
    <ligand>
        <name>substrate</name>
    </ligand>
</feature>
<feature type="binding site" evidence="1">
    <location>
        <begin position="166"/>
        <end position="167"/>
    </location>
    <ligand>
        <name>ATP</name>
        <dbReference type="ChEBI" id="CHEBI:30616"/>
    </ligand>
</feature>
<feature type="binding site" evidence="1">
    <location>
        <begin position="208"/>
        <end position="214"/>
    </location>
    <ligand>
        <name>ATP</name>
        <dbReference type="ChEBI" id="CHEBI:30616"/>
    </ligand>
</feature>
<proteinExistence type="inferred from homology"/>
<evidence type="ECO:0000255" key="1">
    <source>
        <dbReference type="HAMAP-Rule" id="MF_00456"/>
    </source>
</evidence>
<accession>Q46LE0</accession>